<gene>
    <name type="primary">ribF</name>
    <name type="ordered locus">Z0029</name>
    <name type="ordered locus">ECs0028</name>
</gene>
<evidence type="ECO:0000250" key="1">
    <source>
        <dbReference type="UniProtKB" id="Q59263"/>
    </source>
</evidence>
<evidence type="ECO:0000305" key="2"/>
<keyword id="KW-0067">ATP-binding</keyword>
<keyword id="KW-0274">FAD</keyword>
<keyword id="KW-0285">Flavoprotein</keyword>
<keyword id="KW-0288">FMN</keyword>
<keyword id="KW-0418">Kinase</keyword>
<keyword id="KW-0511">Multifunctional enzyme</keyword>
<keyword id="KW-0547">Nucleotide-binding</keyword>
<keyword id="KW-0548">Nucleotidyltransferase</keyword>
<keyword id="KW-1185">Reference proteome</keyword>
<keyword id="KW-0808">Transferase</keyword>
<sequence length="313" mass="34734">MKLIRGIHNLSQAPQEGCVLTIGNFDGVHRGHRALLQGLQEEGRKRNLPVMVMLFEPQPLELFATDKAPARLTRLREKLRYLAECGVDYVLCVRFDRRFAALTAQNFISDLLVKHLRVKFLAVGDDFRFGAGREGDFLLLQKAGMEYGFDITSTQTFCEGGVRISSTAVRQALADDNLALAESLLGHPFAISGRVVHGDELGRTIGFPTANVPLRRQVSPVKGVYAVEVLGLGEKPLPGVANIGTRPTVAGIRQQLEVHLLDVAMDLYGRHIQVVLRKKIRNEQRFASLDELKAQIARDELTAREFFGLTKPA</sequence>
<name>RIBF_ECO57</name>
<accession>P0AG42</accession>
<accession>P08391</accession>
<accession>P75621</accession>
<organism>
    <name type="scientific">Escherichia coli O157:H7</name>
    <dbReference type="NCBI Taxonomy" id="83334"/>
    <lineage>
        <taxon>Bacteria</taxon>
        <taxon>Pseudomonadati</taxon>
        <taxon>Pseudomonadota</taxon>
        <taxon>Gammaproteobacteria</taxon>
        <taxon>Enterobacterales</taxon>
        <taxon>Enterobacteriaceae</taxon>
        <taxon>Escherichia</taxon>
    </lineage>
</organism>
<proteinExistence type="inferred from homology"/>
<dbReference type="EC" id="2.7.1.26" evidence="1"/>
<dbReference type="EC" id="2.7.7.2" evidence="1"/>
<dbReference type="EMBL" id="AE005174">
    <property type="protein sequence ID" value="AAG54327.1"/>
    <property type="molecule type" value="Genomic_DNA"/>
</dbReference>
<dbReference type="EMBL" id="BA000007">
    <property type="protein sequence ID" value="BAB33451.1"/>
    <property type="molecule type" value="Genomic_DNA"/>
</dbReference>
<dbReference type="PIR" id="C85483">
    <property type="entry name" value="C85483"/>
</dbReference>
<dbReference type="PIR" id="D90632">
    <property type="entry name" value="D90632"/>
</dbReference>
<dbReference type="RefSeq" id="NP_308055.1">
    <property type="nucleotide sequence ID" value="NC_002695.1"/>
</dbReference>
<dbReference type="RefSeq" id="WP_000767329.1">
    <property type="nucleotide sequence ID" value="NZ_VOAI01000002.1"/>
</dbReference>
<dbReference type="SMR" id="P0AG42"/>
<dbReference type="STRING" id="155864.Z0029"/>
<dbReference type="GeneID" id="913423"/>
<dbReference type="GeneID" id="93777411"/>
<dbReference type="KEGG" id="ece:Z0029"/>
<dbReference type="KEGG" id="ecs:ECs_0028"/>
<dbReference type="PATRIC" id="fig|386585.9.peg.123"/>
<dbReference type="eggNOG" id="COG0196">
    <property type="taxonomic scope" value="Bacteria"/>
</dbReference>
<dbReference type="HOGENOM" id="CLU_048437_0_1_6"/>
<dbReference type="OMA" id="HRGHQAI"/>
<dbReference type="UniPathway" id="UPA00276">
    <property type="reaction ID" value="UER00406"/>
</dbReference>
<dbReference type="UniPathway" id="UPA00277">
    <property type="reaction ID" value="UER00407"/>
</dbReference>
<dbReference type="Proteomes" id="UP000000558">
    <property type="component" value="Chromosome"/>
</dbReference>
<dbReference type="Proteomes" id="UP000002519">
    <property type="component" value="Chromosome"/>
</dbReference>
<dbReference type="GO" id="GO:0005524">
    <property type="term" value="F:ATP binding"/>
    <property type="evidence" value="ECO:0007669"/>
    <property type="project" value="UniProtKB-KW"/>
</dbReference>
<dbReference type="GO" id="GO:0003919">
    <property type="term" value="F:FMN adenylyltransferase activity"/>
    <property type="evidence" value="ECO:0007669"/>
    <property type="project" value="UniProtKB-EC"/>
</dbReference>
<dbReference type="GO" id="GO:0008531">
    <property type="term" value="F:riboflavin kinase activity"/>
    <property type="evidence" value="ECO:0007669"/>
    <property type="project" value="UniProtKB-EC"/>
</dbReference>
<dbReference type="GO" id="GO:0006747">
    <property type="term" value="P:FAD biosynthetic process"/>
    <property type="evidence" value="ECO:0007669"/>
    <property type="project" value="UniProtKB-UniPathway"/>
</dbReference>
<dbReference type="GO" id="GO:0009398">
    <property type="term" value="P:FMN biosynthetic process"/>
    <property type="evidence" value="ECO:0007669"/>
    <property type="project" value="UniProtKB-UniPathway"/>
</dbReference>
<dbReference type="GO" id="GO:0009231">
    <property type="term" value="P:riboflavin biosynthetic process"/>
    <property type="evidence" value="ECO:0007669"/>
    <property type="project" value="InterPro"/>
</dbReference>
<dbReference type="CDD" id="cd02064">
    <property type="entry name" value="FAD_synthetase_N"/>
    <property type="match status" value="1"/>
</dbReference>
<dbReference type="FunFam" id="2.40.30.30:FF:000001">
    <property type="entry name" value="Riboflavin biosynthesis protein"/>
    <property type="match status" value="1"/>
</dbReference>
<dbReference type="FunFam" id="3.40.50.620:FF:000021">
    <property type="entry name" value="Riboflavin biosynthesis protein"/>
    <property type="match status" value="1"/>
</dbReference>
<dbReference type="Gene3D" id="3.40.50.620">
    <property type="entry name" value="HUPs"/>
    <property type="match status" value="1"/>
</dbReference>
<dbReference type="Gene3D" id="2.40.30.30">
    <property type="entry name" value="Riboflavin kinase-like"/>
    <property type="match status" value="1"/>
</dbReference>
<dbReference type="InterPro" id="IPR015864">
    <property type="entry name" value="FAD_synthase"/>
</dbReference>
<dbReference type="InterPro" id="IPR023468">
    <property type="entry name" value="Riboflavin_kinase"/>
</dbReference>
<dbReference type="InterPro" id="IPR002606">
    <property type="entry name" value="Riboflavin_kinase_bac"/>
</dbReference>
<dbReference type="InterPro" id="IPR015865">
    <property type="entry name" value="Riboflavin_kinase_bac/euk"/>
</dbReference>
<dbReference type="InterPro" id="IPR023465">
    <property type="entry name" value="Riboflavin_kinase_dom_sf"/>
</dbReference>
<dbReference type="InterPro" id="IPR014729">
    <property type="entry name" value="Rossmann-like_a/b/a_fold"/>
</dbReference>
<dbReference type="NCBIfam" id="NF004159">
    <property type="entry name" value="PRK05627.1-2"/>
    <property type="match status" value="1"/>
</dbReference>
<dbReference type="NCBIfam" id="NF004160">
    <property type="entry name" value="PRK05627.1-3"/>
    <property type="match status" value="1"/>
</dbReference>
<dbReference type="NCBIfam" id="NF004162">
    <property type="entry name" value="PRK05627.1-5"/>
    <property type="match status" value="1"/>
</dbReference>
<dbReference type="NCBIfam" id="NF004163">
    <property type="entry name" value="PRK05627.1-6"/>
    <property type="match status" value="1"/>
</dbReference>
<dbReference type="NCBIfam" id="TIGR00083">
    <property type="entry name" value="ribF"/>
    <property type="match status" value="1"/>
</dbReference>
<dbReference type="PANTHER" id="PTHR22749:SF6">
    <property type="entry name" value="RIBOFLAVIN KINASE"/>
    <property type="match status" value="1"/>
</dbReference>
<dbReference type="PANTHER" id="PTHR22749">
    <property type="entry name" value="RIBOFLAVIN KINASE/FMN ADENYLYLTRANSFERASE"/>
    <property type="match status" value="1"/>
</dbReference>
<dbReference type="Pfam" id="PF06574">
    <property type="entry name" value="FAD_syn"/>
    <property type="match status" value="1"/>
</dbReference>
<dbReference type="Pfam" id="PF01687">
    <property type="entry name" value="Flavokinase"/>
    <property type="match status" value="1"/>
</dbReference>
<dbReference type="PIRSF" id="PIRSF004491">
    <property type="entry name" value="FAD_Synth"/>
    <property type="match status" value="1"/>
</dbReference>
<dbReference type="SMART" id="SM00904">
    <property type="entry name" value="Flavokinase"/>
    <property type="match status" value="1"/>
</dbReference>
<dbReference type="SUPFAM" id="SSF52374">
    <property type="entry name" value="Nucleotidylyl transferase"/>
    <property type="match status" value="1"/>
</dbReference>
<dbReference type="SUPFAM" id="SSF82114">
    <property type="entry name" value="Riboflavin kinase-like"/>
    <property type="match status" value="1"/>
</dbReference>
<reference key="1">
    <citation type="journal article" date="2001" name="Nature">
        <title>Genome sequence of enterohaemorrhagic Escherichia coli O157:H7.</title>
        <authorList>
            <person name="Perna N.T."/>
            <person name="Plunkett G. III"/>
            <person name="Burland V."/>
            <person name="Mau B."/>
            <person name="Glasner J.D."/>
            <person name="Rose D.J."/>
            <person name="Mayhew G.F."/>
            <person name="Evans P.S."/>
            <person name="Gregor J."/>
            <person name="Kirkpatrick H.A."/>
            <person name="Posfai G."/>
            <person name="Hackett J."/>
            <person name="Klink S."/>
            <person name="Boutin A."/>
            <person name="Shao Y."/>
            <person name="Miller L."/>
            <person name="Grotbeck E.J."/>
            <person name="Davis N.W."/>
            <person name="Lim A."/>
            <person name="Dimalanta E.T."/>
            <person name="Potamousis K."/>
            <person name="Apodaca J."/>
            <person name="Anantharaman T.S."/>
            <person name="Lin J."/>
            <person name="Yen G."/>
            <person name="Schwartz D.C."/>
            <person name="Welch R.A."/>
            <person name="Blattner F.R."/>
        </authorList>
    </citation>
    <scope>NUCLEOTIDE SEQUENCE [LARGE SCALE GENOMIC DNA]</scope>
    <source>
        <strain>O157:H7 / EDL933 / ATCC 700927 / EHEC</strain>
    </source>
</reference>
<reference key="2">
    <citation type="journal article" date="2001" name="DNA Res.">
        <title>Complete genome sequence of enterohemorrhagic Escherichia coli O157:H7 and genomic comparison with a laboratory strain K-12.</title>
        <authorList>
            <person name="Hayashi T."/>
            <person name="Makino K."/>
            <person name="Ohnishi M."/>
            <person name="Kurokawa K."/>
            <person name="Ishii K."/>
            <person name="Yokoyama K."/>
            <person name="Han C.-G."/>
            <person name="Ohtsubo E."/>
            <person name="Nakayama K."/>
            <person name="Murata T."/>
            <person name="Tanaka M."/>
            <person name="Tobe T."/>
            <person name="Iida T."/>
            <person name="Takami H."/>
            <person name="Honda T."/>
            <person name="Sasakawa C."/>
            <person name="Ogasawara N."/>
            <person name="Yasunaga T."/>
            <person name="Kuhara S."/>
            <person name="Shiba T."/>
            <person name="Hattori M."/>
            <person name="Shinagawa H."/>
        </authorList>
    </citation>
    <scope>NUCLEOTIDE SEQUENCE [LARGE SCALE GENOMIC DNA]</scope>
    <source>
        <strain>O157:H7 / Sakai / RIMD 0509952 / EHEC</strain>
    </source>
</reference>
<comment type="function">
    <text evidence="1">Catalyzes the phosphorylation of riboflavin to FMN followed by the adenylation of FMN to FAD.</text>
</comment>
<comment type="catalytic activity">
    <reaction evidence="1">
        <text>riboflavin + ATP = FMN + ADP + H(+)</text>
        <dbReference type="Rhea" id="RHEA:14357"/>
        <dbReference type="ChEBI" id="CHEBI:15378"/>
        <dbReference type="ChEBI" id="CHEBI:30616"/>
        <dbReference type="ChEBI" id="CHEBI:57986"/>
        <dbReference type="ChEBI" id="CHEBI:58210"/>
        <dbReference type="ChEBI" id="CHEBI:456216"/>
        <dbReference type="EC" id="2.7.1.26"/>
    </reaction>
</comment>
<comment type="catalytic activity">
    <reaction evidence="1">
        <text>FMN + ATP + H(+) = FAD + diphosphate</text>
        <dbReference type="Rhea" id="RHEA:17237"/>
        <dbReference type="ChEBI" id="CHEBI:15378"/>
        <dbReference type="ChEBI" id="CHEBI:30616"/>
        <dbReference type="ChEBI" id="CHEBI:33019"/>
        <dbReference type="ChEBI" id="CHEBI:57692"/>
        <dbReference type="ChEBI" id="CHEBI:58210"/>
        <dbReference type="EC" id="2.7.7.2"/>
    </reaction>
</comment>
<comment type="pathway">
    <text evidence="1">Cofactor biosynthesis; FAD biosynthesis; FAD from FMN: step 1/1.</text>
</comment>
<comment type="pathway">
    <text evidence="1">Cofactor biosynthesis; FMN biosynthesis; FMN from riboflavin (ATP route): step 1/1.</text>
</comment>
<comment type="similarity">
    <text evidence="2">Belongs to the RibF family.</text>
</comment>
<protein>
    <recommendedName>
        <fullName evidence="1">Bifunctional riboflavin kinase/FMN adenylyltransferase</fullName>
    </recommendedName>
    <alternativeName>
        <fullName evidence="1">Riboflavin biosynthesis protein RibF</fullName>
    </alternativeName>
    <domain>
        <recommendedName>
            <fullName evidence="1">Riboflavin kinase</fullName>
            <ecNumber evidence="1">2.7.1.26</ecNumber>
        </recommendedName>
        <alternativeName>
            <fullName evidence="1">Flavokinase</fullName>
        </alternativeName>
    </domain>
    <domain>
        <recommendedName>
            <fullName evidence="1">FMN adenylyltransferase</fullName>
            <ecNumber evidence="1">2.7.7.2</ecNumber>
        </recommendedName>
        <alternativeName>
            <fullName evidence="1">FAD pyrophosphorylase</fullName>
        </alternativeName>
        <alternativeName>
            <fullName evidence="1">FAD synthase</fullName>
        </alternativeName>
    </domain>
</protein>
<feature type="chain" id="PRO_0000194138" description="Bifunctional riboflavin kinase/FMN adenylyltransferase">
    <location>
        <begin position="1"/>
        <end position="313"/>
    </location>
</feature>